<dbReference type="EC" id="2.3.2.27" evidence="3"/>
<dbReference type="EMBL" id="BC123470">
    <property type="protein sequence ID" value="AAI23471.1"/>
    <property type="molecule type" value="mRNA"/>
</dbReference>
<dbReference type="EMBL" id="BC146068">
    <property type="protein sequence ID" value="AAI46069.1"/>
    <property type="molecule type" value="mRNA"/>
</dbReference>
<dbReference type="RefSeq" id="NP_001070337.1">
    <property type="nucleotide sequence ID" value="NM_001076869.1"/>
</dbReference>
<dbReference type="FunCoup" id="Q08E13">
    <property type="interactions" value="3876"/>
</dbReference>
<dbReference type="STRING" id="9913.ENSBTAP00000020937"/>
<dbReference type="PaxDb" id="9913-ENSBTAP00000020937"/>
<dbReference type="GeneID" id="520757"/>
<dbReference type="KEGG" id="bta:520757"/>
<dbReference type="CTD" id="9921"/>
<dbReference type="VEuPathDB" id="HostDB:ENSBTAG00000015767"/>
<dbReference type="eggNOG" id="KOG2164">
    <property type="taxonomic scope" value="Eukaryota"/>
</dbReference>
<dbReference type="HOGENOM" id="CLU_018206_0_0_1"/>
<dbReference type="InParanoid" id="Q08E13"/>
<dbReference type="OMA" id="PRWKKCP"/>
<dbReference type="OrthoDB" id="10064108at2759"/>
<dbReference type="TreeFam" id="TF323455"/>
<dbReference type="UniPathway" id="UPA00143"/>
<dbReference type="Proteomes" id="UP000009136">
    <property type="component" value="Chromosome 17"/>
</dbReference>
<dbReference type="Bgee" id="ENSBTAG00000015767">
    <property type="expression patterns" value="Expressed in cardiac ventricle and 106 other cell types or tissues"/>
</dbReference>
<dbReference type="GO" id="GO:0005737">
    <property type="term" value="C:cytoplasm"/>
    <property type="evidence" value="ECO:0007669"/>
    <property type="project" value="UniProtKB-SubCell"/>
</dbReference>
<dbReference type="GO" id="GO:0005634">
    <property type="term" value="C:nucleus"/>
    <property type="evidence" value="ECO:0007669"/>
    <property type="project" value="UniProtKB-SubCell"/>
</dbReference>
<dbReference type="GO" id="GO:0000976">
    <property type="term" value="F:transcription cis-regulatory region binding"/>
    <property type="evidence" value="ECO:0000318"/>
    <property type="project" value="GO_Central"/>
</dbReference>
<dbReference type="GO" id="GO:0061630">
    <property type="term" value="F:ubiquitin protein ligase activity"/>
    <property type="evidence" value="ECO:0000250"/>
    <property type="project" value="UniProtKB"/>
</dbReference>
<dbReference type="GO" id="GO:0008270">
    <property type="term" value="F:zinc ion binding"/>
    <property type="evidence" value="ECO:0007669"/>
    <property type="project" value="UniProtKB-KW"/>
</dbReference>
<dbReference type="GO" id="GO:0031643">
    <property type="term" value="P:positive regulation of myelination"/>
    <property type="evidence" value="ECO:0000318"/>
    <property type="project" value="GO_Central"/>
</dbReference>
<dbReference type="GO" id="GO:0045944">
    <property type="term" value="P:positive regulation of transcription by RNA polymerase II"/>
    <property type="evidence" value="ECO:0000318"/>
    <property type="project" value="GO_Central"/>
</dbReference>
<dbReference type="GO" id="GO:0006513">
    <property type="term" value="P:protein monoubiquitination"/>
    <property type="evidence" value="ECO:0000250"/>
    <property type="project" value="UniProtKB"/>
</dbReference>
<dbReference type="GO" id="GO:1990116">
    <property type="term" value="P:ribosome-associated ubiquitin-dependent protein catabolic process"/>
    <property type="evidence" value="ECO:0000250"/>
    <property type="project" value="UniProtKB"/>
</dbReference>
<dbReference type="CDD" id="cd16536">
    <property type="entry name" value="RING-HC_RNF10"/>
    <property type="match status" value="1"/>
</dbReference>
<dbReference type="FunFam" id="3.30.40.10:FF:000112">
    <property type="entry name" value="RING finger protein 10"/>
    <property type="match status" value="1"/>
</dbReference>
<dbReference type="Gene3D" id="3.30.40.10">
    <property type="entry name" value="Zinc/RING finger domain, C3HC4 (zinc finger)"/>
    <property type="match status" value="1"/>
</dbReference>
<dbReference type="InterPro" id="IPR039739">
    <property type="entry name" value="MAG2/RNF10"/>
</dbReference>
<dbReference type="InterPro" id="IPR018957">
    <property type="entry name" value="Znf_C3HC4_RING-type"/>
</dbReference>
<dbReference type="InterPro" id="IPR001841">
    <property type="entry name" value="Znf_RING"/>
</dbReference>
<dbReference type="InterPro" id="IPR013083">
    <property type="entry name" value="Znf_RING/FYVE/PHD"/>
</dbReference>
<dbReference type="InterPro" id="IPR017907">
    <property type="entry name" value="Znf_RING_CS"/>
</dbReference>
<dbReference type="PANTHER" id="PTHR12983:SF9">
    <property type="entry name" value="E3 UBIQUITIN-PROTEIN LIGASE RNF10"/>
    <property type="match status" value="1"/>
</dbReference>
<dbReference type="PANTHER" id="PTHR12983">
    <property type="entry name" value="RING FINGER 10 FAMILY MEMBER"/>
    <property type="match status" value="1"/>
</dbReference>
<dbReference type="Pfam" id="PF00097">
    <property type="entry name" value="zf-C3HC4"/>
    <property type="match status" value="1"/>
</dbReference>
<dbReference type="SMART" id="SM00184">
    <property type="entry name" value="RING"/>
    <property type="match status" value="1"/>
</dbReference>
<dbReference type="SUPFAM" id="SSF57850">
    <property type="entry name" value="RING/U-box"/>
    <property type="match status" value="1"/>
</dbReference>
<dbReference type="PROSITE" id="PS00518">
    <property type="entry name" value="ZF_RING_1"/>
    <property type="match status" value="1"/>
</dbReference>
<dbReference type="PROSITE" id="PS50089">
    <property type="entry name" value="ZF_RING_2"/>
    <property type="match status" value="1"/>
</dbReference>
<organism>
    <name type="scientific">Bos taurus</name>
    <name type="common">Bovine</name>
    <dbReference type="NCBI Taxonomy" id="9913"/>
    <lineage>
        <taxon>Eukaryota</taxon>
        <taxon>Metazoa</taxon>
        <taxon>Chordata</taxon>
        <taxon>Craniata</taxon>
        <taxon>Vertebrata</taxon>
        <taxon>Euteleostomi</taxon>
        <taxon>Mammalia</taxon>
        <taxon>Eutheria</taxon>
        <taxon>Laurasiatheria</taxon>
        <taxon>Artiodactyla</taxon>
        <taxon>Ruminantia</taxon>
        <taxon>Pecora</taxon>
        <taxon>Bovidae</taxon>
        <taxon>Bovinae</taxon>
        <taxon>Bos</taxon>
    </lineage>
</organism>
<sequence length="810" mass="89716">MPQSSPSAAATASDMDKNSGSSSSSASSGSSKGQQPPRSASAGPAGESKPKSDGKNSSGSKRYNRKREPSYPKNENFINQSRRSNSQKSKTFNKMPPQRGGGSSKLFSSSFNGGRRDEVAEAQRAEFSPAQFSGPKKINLNHLLNFTFEPRGQAGHFEGSGHGSWGKRNKWGHKPFNKELFLQANCQFVVSEDQDYTVHFADPDTLVNWDFVEQVRICSHEVPSCPICLYPPTAAKITRCGHIFCWACILHYLSLSEKTWSKCPICYSSVHKKDLKSVVATESRQYVVGDTITMQLMKREKGVLVALPKSKWMNVDHPIHLGDEQHSQYSKLLLASKEQVLRRVVQEEKAALERQLAEEKHTPESCFIEAAIQELKAREEALSGLAESRGEVPGVVAALEQRVLMAPLAKESVFQPRKGVLEYLSAFDEDATEVCSLGPPHPVALPLVEEEETVSEPEPEGLSEACEDLELVEDNLGEGTICTESSQQEPVSKPSVTHLSSSPCYYFYQAEDGQHMFLHPVNVRCLVREYGSLEQSPEKISATVVEISGYSMSEDMRQRHRYLSHLPLTCEFSICELALQPPLVSKETLEIFSDDIEKRKRQRQKKAREERRRERRIEMEENKKQGKYPEVHIPLENLQQFPAFNSYTCSSDSALGSTSTEGRGALSLSPLSRSPGSQADFLLTPLSPTASQGSPSFCVGSLEEDSPFPSFAQMLRVGKAKADVWPKTAPKKDENTLGPPAPVDSDGESDNSDRVPVPSFQNSFSQAIEAAFMKLDTPVTSDPLSEEKGGKKRKKQKQKLLFSTSVVHTK</sequence>
<proteinExistence type="evidence at transcript level"/>
<evidence type="ECO:0000250" key="1"/>
<evidence type="ECO:0000250" key="2">
    <source>
        <dbReference type="UniProtKB" id="Q5XI59"/>
    </source>
</evidence>
<evidence type="ECO:0000250" key="3">
    <source>
        <dbReference type="UniProtKB" id="Q8N5U6"/>
    </source>
</evidence>
<evidence type="ECO:0000255" key="4">
    <source>
        <dbReference type="PROSITE-ProRule" id="PRU00175"/>
    </source>
</evidence>
<evidence type="ECO:0000256" key="5">
    <source>
        <dbReference type="SAM" id="MobiDB-lite"/>
    </source>
</evidence>
<evidence type="ECO:0000305" key="6"/>
<accession>Q08E13</accession>
<accession>A6H708</accession>
<comment type="function">
    <text evidence="2 3">E3 ubiquitin-protein ligase that catalyzes monoubiquitination of 40S ribosomal proteins RPS2/us5 and RPS3/us3 in response to ribosome stalling. Part of a ribosome quality control that takes place when ribosomes have stalled during translation initiation (iRQC): RNF10 acts by mediating monoubiquitination of RPS2/us5 and RPS3/us3, promoting their degradation by the proteasome. Also promotes ubiquitination of 40S ribosomal proteins in response to ribosome stalling during translation elongation. The action of RNF10 in iRQC is counteracted by USP10 (By similarity). May also act as a transcriptional factor involved in the regulation of MAG (Myelin-associated glycoprotein) expression. Acts as a regulator of Schwann cell differentiation and myelination (By similarity).</text>
</comment>
<comment type="catalytic activity">
    <reaction evidence="3">
        <text>S-ubiquitinyl-[E2 ubiquitin-conjugating enzyme]-L-cysteine + [acceptor protein]-L-lysine = [E2 ubiquitin-conjugating enzyme]-L-cysteine + N(6)-ubiquitinyl-[acceptor protein]-L-lysine.</text>
        <dbReference type="EC" id="2.3.2.27"/>
    </reaction>
</comment>
<comment type="pathway">
    <text evidence="3">Protein modification; protein ubiquitination.</text>
</comment>
<comment type="subunit">
    <text evidence="3">Interacts with MEOX2.</text>
</comment>
<comment type="subcellular location">
    <subcellularLocation>
        <location evidence="3">Cytoplasm</location>
    </subcellularLocation>
    <subcellularLocation>
        <location evidence="2">Nucleus</location>
    </subcellularLocation>
</comment>
<comment type="similarity">
    <text evidence="6">Belongs to the RNF10 family.</text>
</comment>
<name>RNF10_BOVIN</name>
<gene>
    <name type="primary">RNF10</name>
</gene>
<keyword id="KW-0963">Cytoplasm</keyword>
<keyword id="KW-0479">Metal-binding</keyword>
<keyword id="KW-0539">Nucleus</keyword>
<keyword id="KW-0597">Phosphoprotein</keyword>
<keyword id="KW-1185">Reference proteome</keyword>
<keyword id="KW-0808">Transferase</keyword>
<keyword id="KW-0833">Ubl conjugation pathway</keyword>
<keyword id="KW-0862">Zinc</keyword>
<keyword id="KW-0863">Zinc-finger</keyword>
<protein>
    <recommendedName>
        <fullName evidence="6">E3 ubiquitin-protein ligase RNF10</fullName>
        <ecNumber evidence="3">2.3.2.27</ecNumber>
    </recommendedName>
    <alternativeName>
        <fullName evidence="6">RING finger protein 10</fullName>
    </alternativeName>
</protein>
<reference key="1">
    <citation type="submission" date="2007-06" db="EMBL/GenBank/DDBJ databases">
        <authorList>
            <consortium name="NIH - Mammalian Gene Collection (MGC) project"/>
        </authorList>
    </citation>
    <scope>NUCLEOTIDE SEQUENCE [LARGE SCALE MRNA]</scope>
    <source>
        <strain>Hereford</strain>
        <tissue>Fetal skin</tissue>
    </source>
</reference>
<feature type="chain" id="PRO_0000283048" description="E3 ubiquitin-protein ligase RNF10">
    <location>
        <begin position="1"/>
        <end position="810"/>
    </location>
</feature>
<feature type="zinc finger region" description="RING-type" evidence="4">
    <location>
        <begin position="225"/>
        <end position="267"/>
    </location>
</feature>
<feature type="region of interest" description="Disordered" evidence="5">
    <location>
        <begin position="1"/>
        <end position="119"/>
    </location>
</feature>
<feature type="region of interest" description="Interaction with MEOX2" evidence="1">
    <location>
        <begin position="101"/>
        <end position="185"/>
    </location>
</feature>
<feature type="region of interest" description="Disordered" evidence="5">
    <location>
        <begin position="598"/>
        <end position="623"/>
    </location>
</feature>
<feature type="region of interest" description="Disordered" evidence="5">
    <location>
        <begin position="652"/>
        <end position="674"/>
    </location>
</feature>
<feature type="region of interest" description="Disordered" evidence="5">
    <location>
        <begin position="722"/>
        <end position="759"/>
    </location>
</feature>
<feature type="region of interest" description="Disordered" evidence="5">
    <location>
        <begin position="775"/>
        <end position="810"/>
    </location>
</feature>
<feature type="compositionally biased region" description="Low complexity" evidence="5">
    <location>
        <begin position="1"/>
        <end position="31"/>
    </location>
</feature>
<feature type="compositionally biased region" description="Polar residues" evidence="5">
    <location>
        <begin position="76"/>
        <end position="92"/>
    </location>
</feature>
<feature type="compositionally biased region" description="Low complexity" evidence="5">
    <location>
        <begin position="104"/>
        <end position="113"/>
    </location>
</feature>
<feature type="compositionally biased region" description="Basic and acidic residues" evidence="5">
    <location>
        <begin position="607"/>
        <end position="623"/>
    </location>
</feature>
<feature type="compositionally biased region" description="Polar residues" evidence="5">
    <location>
        <begin position="652"/>
        <end position="661"/>
    </location>
</feature>
<feature type="compositionally biased region" description="Low complexity" evidence="5">
    <location>
        <begin position="662"/>
        <end position="674"/>
    </location>
</feature>
<feature type="compositionally biased region" description="Basic and acidic residues" evidence="5">
    <location>
        <begin position="722"/>
        <end position="735"/>
    </location>
</feature>
<feature type="compositionally biased region" description="Polar residues" evidence="5">
    <location>
        <begin position="801"/>
        <end position="810"/>
    </location>
</feature>
<feature type="modified residue" description="Phosphoserine" evidence="3">
    <location>
        <position position="5"/>
    </location>
</feature>
<feature type="modified residue" description="Phosphoserine" evidence="3">
    <location>
        <position position="110"/>
    </location>
</feature>
<feature type="modified residue" description="Phosphoserine" evidence="3">
    <location>
        <position position="128"/>
    </location>
</feature>